<organism>
    <name type="scientific">Hepatitis B virus genotype A1 subtype adw2 (isolate Southern-Africa/Cai)</name>
    <name type="common">HBV-A</name>
    <dbReference type="NCBI Taxonomy" id="489449"/>
    <lineage>
        <taxon>Viruses</taxon>
        <taxon>Riboviria</taxon>
        <taxon>Pararnavirae</taxon>
        <taxon>Artverviricota</taxon>
        <taxon>Revtraviricetes</taxon>
        <taxon>Blubervirales</taxon>
        <taxon>Hepadnaviridae</taxon>
        <taxon>Orthohepadnavirus</taxon>
        <taxon>Hepatitis B virus</taxon>
    </lineage>
</organism>
<gene>
    <name evidence="3" type="primary">S</name>
</gene>
<organismHost>
    <name type="scientific">Homo sapiens</name>
    <name type="common">Human</name>
    <dbReference type="NCBI Taxonomy" id="9606"/>
</organismHost>
<organismHost>
    <name type="scientific">Pan troglodytes</name>
    <name type="common">Chimpanzee</name>
    <dbReference type="NCBI Taxonomy" id="9598"/>
</organismHost>
<feature type="initiator methionine" description="Removed; by host" evidence="3">
    <location>
        <position position="1"/>
    </location>
</feature>
<feature type="chain" id="PRO_0000319070" description="Large envelope protein" evidence="3">
    <location>
        <begin position="2"/>
        <end position="400"/>
    </location>
</feature>
<feature type="topological domain" description="Intravirion; in internal conformation" evidence="3">
    <location>
        <begin position="2"/>
        <end position="253"/>
    </location>
</feature>
<feature type="topological domain" description="Virion surface; in external conformation" evidence="3">
    <location>
        <begin position="2"/>
        <end position="181"/>
    </location>
</feature>
<feature type="transmembrane region" description="Helical; Name=TM1; Note=In external conformation" evidence="3">
    <location>
        <begin position="182"/>
        <end position="202"/>
    </location>
</feature>
<feature type="topological domain" description="Intravirion; in external conformation" evidence="3">
    <location>
        <begin position="203"/>
        <end position="253"/>
    </location>
</feature>
<feature type="transmembrane region" description="Helical; Name=TM2" evidence="3">
    <location>
        <begin position="254"/>
        <end position="274"/>
    </location>
</feature>
<feature type="topological domain" description="Virion surface" evidence="3">
    <location>
        <begin position="275"/>
        <end position="348"/>
    </location>
</feature>
<feature type="transmembrane region" description="Helical" evidence="3">
    <location>
        <begin position="349"/>
        <end position="369"/>
    </location>
</feature>
<feature type="topological domain" description="Intravirion" evidence="3">
    <location>
        <begin position="370"/>
        <end position="375"/>
    </location>
</feature>
<feature type="transmembrane region" description="Helical; Name=TM3" evidence="3">
    <location>
        <begin position="376"/>
        <end position="398"/>
    </location>
</feature>
<feature type="topological domain" description="Virion surface" evidence="3">
    <location>
        <begin position="399"/>
        <end position="400"/>
    </location>
</feature>
<feature type="region of interest" description="Disordered" evidence="4">
    <location>
        <begin position="1"/>
        <end position="20"/>
    </location>
</feature>
<feature type="region of interest" description="Pre-S" evidence="3">
    <location>
        <begin position="2"/>
        <end position="174"/>
    </location>
</feature>
<feature type="region of interest" description="Pre-S1" evidence="3">
    <location>
        <begin position="2"/>
        <end position="119"/>
    </location>
</feature>
<feature type="region of interest" description="Pre-S2" evidence="3">
    <location>
        <begin position="120"/>
        <end position="174"/>
    </location>
</feature>
<feature type="lipid moiety-binding region" description="N-myristoyl glycine; by host" evidence="3">
    <location>
        <position position="2"/>
    </location>
</feature>
<feature type="glycosylation site" description="N-linked (GlcNAc...) asparagine; by host" evidence="3">
    <location>
        <position position="320"/>
    </location>
</feature>
<feature type="splice variant" id="VSP_031352" description="In isoform S." evidence="5">
    <location>
        <begin position="1"/>
        <end position="174"/>
    </location>
</feature>
<feature type="splice variant" id="VSP_031353" description="In isoform M." evidence="5">
    <location>
        <begin position="1"/>
        <end position="119"/>
    </location>
</feature>
<feature type="sequence variant" description="In strain: Integrated in PLC/PRF/5 cell line.">
    <original>A</original>
    <variation>G</variation>
    <location>
        <position position="340"/>
    </location>
</feature>
<feature type="sequence variant" description="In strain: Integrated in PLC/PRF/5 cell line.">
    <original>S</original>
    <variation>N</variation>
    <location>
        <position position="378"/>
    </location>
</feature>
<feature type="modified residue" description="N-acetylmethionine" evidence="5">
    <location sequence="P31873-2">
        <position position="1"/>
    </location>
</feature>
<feature type="glycosylation site" description="N-linked (GlcNAc...) asparagine" evidence="5">
    <location sequence="P31873-2">
        <position position="4"/>
    </location>
</feature>
<comment type="function">
    <text evidence="3">The large envelope protein exists in two topological conformations, one which is termed 'external' or Le-HBsAg and the other 'internal' or Li-HBsAg. In its external conformation the protein attaches the virus to cell receptors and thereby initiating infection. This interaction determines the species specificity and liver tropism. This attachment induces virion internalization predominantly through caveolin-mediated endocytosis. The large envelope protein also assures fusion between virion membrane and endosomal membrane. In its internal conformation the protein plays a role in virion morphogenesis and mediates the contact with the nucleocapsid like a matrix protein.</text>
</comment>
<comment type="function">
    <text evidence="3">The middle envelope protein plays an important role in the budding of the virion. It is involved in the induction of budding in a nucleocapsid independent way. In this process the majority of envelope proteins bud to form subviral lipoprotein particles of 22 nm of diameter that do not contain a nucleocapsid.</text>
</comment>
<comment type="subunit">
    <molecule>Isoform L</molecule>
    <text evidence="2">In its internal form (Li-HBsAg), interacts with the capsid protein and with the isoform S. Interacts with host chaperone CANX.</text>
</comment>
<comment type="subunit">
    <molecule>Isoform M</molecule>
    <text evidence="2">Associates with host chaperone CANX through its pre-S2 N glycan; this association may be essential for isoform M proper secretion.</text>
</comment>
<comment type="subunit">
    <molecule>Isoform S</molecule>
    <text evidence="2">Interacts with isoform L. Interacts with the antigens of satellite virus HDV (HDVAgs); this interaction is required for encapsidation of HDV genomic RNA.</text>
</comment>
<comment type="subcellular location">
    <subcellularLocation>
        <location evidence="3">Virion membrane</location>
    </subcellularLocation>
</comment>
<comment type="alternative products">
    <event type="alternative splicing"/>
    <event type="alternative initiation"/>
    <isoform>
        <id>P31873-1</id>
        <name>L</name>
        <name>Large envelope protein</name>
        <name>LHB</name>
        <name>L-HBsAg</name>
        <sequence type="displayed"/>
    </isoform>
    <isoform>
        <id>P31873-2</id>
        <name>M</name>
        <name>Middle envelope protein</name>
        <name>MHB</name>
        <name>M-HBsAg</name>
        <sequence type="described" ref="VSP_031353"/>
    </isoform>
    <isoform>
        <id>P31873-3</id>
        <name>S</name>
        <name>Small envelope protein</name>
        <name>SHB</name>
        <name>S-HBsAg</name>
        <sequence type="described" ref="VSP_031352"/>
    </isoform>
</comment>
<comment type="domain">
    <text evidence="3">The large envelope protein is synthesized with the pre-S region at the cytosolic side of the endoplasmic reticulum and, hence will be within the virion after budding. Therefore the pre-S region is not N-glycosylated. Later a post-translational translocation of N-terminal pre-S and TM1 domains occur in about 50% of proteins at the virion surface. These molecules change their topology by an unknown mechanism, resulting in exposure of pre-S region at virion surface. For isoform M in contrast, the pre-S2 region is translocated cotranslationally to the endoplasmic reticulum lumen and is N-glycosylated.</text>
</comment>
<comment type="PTM">
    <text evidence="1 3">Isoform M is N-terminally acetylated by host at a ratio of 90%, and N-glycosylated by host at the pre-S2 region.</text>
</comment>
<comment type="PTM">
    <text evidence="3">Myristoylated.</text>
</comment>
<comment type="biotechnology">
    <text>Systematic vaccination of individuals at risk of exposure to the virus has been the main method of controlling the morbidity and mortality associated with hepatitis B. The first hepatitis B vaccine was manufactured by the purification and inactivation of HBsAg obtained from the plasma of chronic hepatitis B virus carriers. The vaccine is now produced by recombinant DNA techniques and expression of the S isoform in yeast cells. The pre-S region do not seem to induce strong enough antigenic response.</text>
</comment>
<comment type="similarity">
    <text evidence="3">Belongs to the orthohepadnavirus major surface antigen family.</text>
</comment>
<comment type="sequence caution" evidence="5">
    <conflict type="erroneous initiation">
        <sequence resource="EMBL-CDS" id="AAA45516"/>
    </conflict>
</comment>
<comment type="sequence caution" evidence="5">
    <conflict type="erroneous initiation">
        <sequence resource="EMBL-CDS" id="CAA28506"/>
    </conflict>
</comment>
<evidence type="ECO:0000250" key="1">
    <source>
        <dbReference type="UniProtKB" id="P03138"/>
    </source>
</evidence>
<evidence type="ECO:0000250" key="2">
    <source>
        <dbReference type="UniProtKB" id="P03141"/>
    </source>
</evidence>
<evidence type="ECO:0000255" key="3">
    <source>
        <dbReference type="HAMAP-Rule" id="MF_04075"/>
    </source>
</evidence>
<evidence type="ECO:0000256" key="4">
    <source>
        <dbReference type="SAM" id="MobiDB-lite"/>
    </source>
</evidence>
<evidence type="ECO:0000305" key="5"/>
<reference key="1">
    <citation type="journal article" date="1988" name="Gene">
        <title>Nucleotide sequence of integrated hepatitis B virus DNA and human flanking regions in the genome of the PLC/PRF/5 cell line.</title>
        <authorList>
            <person name="Rivkina M.B."/>
            <person name="Lunin V.G."/>
            <person name="Mahov A.M."/>
            <person name="Tikchonenko T.I."/>
            <person name="Kukain R.A."/>
        </authorList>
    </citation>
    <scope>NUCLEOTIDE SEQUENCE [GENOMIC DNA] OF 175-400</scope>
    <source>
        <strain>Integrated in PLC/PRF/5 cell line</strain>
    </source>
</reference>
<reference key="2">
    <citation type="journal article" date="2005" name="J. Med. Virol.">
        <title>Increased hepatocarcinogenic potential of hepatitis B virus genotype A in Bantu-speaking sub-saharan Africans.</title>
        <authorList>
            <person name="Kew M.C."/>
            <person name="Kramvis A."/>
            <person name="Yu M.C."/>
            <person name="Arakawa K."/>
            <person name="Hodkinson J."/>
        </authorList>
    </citation>
    <scope>NUCLEOTIDE SEQUENCE [GENOMIC DNA]</scope>
</reference>
<reference key="3">
    <citation type="journal article" date="1996" name="Intervirology">
        <title>Functions of the large hepatitis B virus surface protein in viral particle morphogenesis.</title>
        <authorList>
            <person name="Bruss V."/>
            <person name="Gerhardt E."/>
            <person name="Vieluf K."/>
            <person name="Wunderlich G."/>
        </authorList>
    </citation>
    <scope>REVIEW</scope>
</reference>
<reference key="4">
    <citation type="journal article" date="1998" name="Adv. Exp. Med. Biol.">
        <title>Role of glycan processing in hepatitis B virus envelope protein trafficking.</title>
        <authorList>
            <person name="Block T.M."/>
            <person name="Lu X."/>
            <person name="Mehta A."/>
            <person name="Park J."/>
            <person name="Blumberg B.S."/>
            <person name="Dwek R."/>
        </authorList>
    </citation>
    <scope>REVIEW</scope>
</reference>
<reference key="5">
    <citation type="journal article" date="2004" name="Virus Res.">
        <title>Envelopment of the hepatitis B virus nucleocapsid.</title>
        <authorList>
            <person name="Bruss V."/>
        </authorList>
    </citation>
    <scope>REVIEW</scope>
</reference>
<reference key="6">
    <citation type="journal article" date="2006" name="Cancer Sci.">
        <title>Hepatitis B virus pre-S mutants, endoplasmic reticulum stress and hepatocarcinogenesis.</title>
        <authorList>
            <person name="Wang H.C."/>
            <person name="Huang W."/>
            <person name="Lai M.D."/>
            <person name="Su I.J."/>
        </authorList>
    </citation>
    <scope>REVIEW</scope>
</reference>
<keyword id="KW-0007">Acetylation</keyword>
<keyword id="KW-0024">Alternative initiation</keyword>
<keyword id="KW-0025">Alternative splicing</keyword>
<keyword id="KW-1166">Caveolin-mediated endocytosis of virus by host</keyword>
<keyword id="KW-1170">Fusion of virus membrane with host endosomal membrane</keyword>
<keyword id="KW-1168">Fusion of virus membrane with host membrane</keyword>
<keyword id="KW-0325">Glycoprotein</keyword>
<keyword id="KW-0945">Host-virus interaction</keyword>
<keyword id="KW-0449">Lipoprotein</keyword>
<keyword id="KW-0472">Membrane</keyword>
<keyword id="KW-0519">Myristate</keyword>
<keyword id="KW-0812">Transmembrane</keyword>
<keyword id="KW-1133">Transmembrane helix</keyword>
<keyword id="KW-1161">Viral attachment to host cell</keyword>
<keyword id="KW-0261">Viral envelope protein</keyword>
<keyword id="KW-1162">Viral penetration into host cytoplasm</keyword>
<keyword id="KW-0946">Virion</keyword>
<keyword id="KW-1164">Virus endocytosis by host</keyword>
<keyword id="KW-1160">Virus entry into host cell</keyword>
<name>HBSAG_HBVA1</name>
<sequence length="400" mass="43761">MGGWSAKPRKGMGTNLSVPNPLGFFPDHQLDPAFGANSNNPDWDFNPNKDHWPEANQVGVGAFGPGFTPPHGGLLGWSSQAQGTLHTVPAVPPPASTNRQTGRQPTPISPPLRDSHPQAMQWNSTAFQQALQDPRVRGLFFPAGGSSSGTVNPAPNIASHISSISSRTGDPALNMENITSGFLGPLLVLQAGFFLLTRILTIPQSLDSWWTSLNFLGGSPVCLGQNSQSPTSNHSPTSCPPICPGYRWMCLRRFIIFLFILLLCLIFLLVLLDYQGMLPVCPLIPGSTTTSTGPCKTCTTPAQGNSMFPSCCCTKPTDGNCTCIPIPSSWAFAKYLWEWASVRFSWLSLLVPFVQWFVGLSPTVWLSVIWMMWYWGPSLYNILSPFIPLLPIFFCLWVYI</sequence>
<proteinExistence type="evidence at protein level"/>
<protein>
    <recommendedName>
        <fullName evidence="3">Large envelope protein</fullName>
    </recommendedName>
    <alternativeName>
        <fullName evidence="3">L glycoprotein</fullName>
    </alternativeName>
    <alternativeName>
        <fullName evidence="3">L-HBsAg</fullName>
        <shortName evidence="3">LHB</shortName>
    </alternativeName>
    <alternativeName>
        <fullName evidence="3">Large S protein</fullName>
    </alternativeName>
    <alternativeName>
        <fullName evidence="3">Large surface protein</fullName>
    </alternativeName>
    <alternativeName>
        <fullName evidence="3">Major surface antigen</fullName>
    </alternativeName>
</protein>
<accession>P31873</accession>
<accession>Q56UJ1</accession>
<dbReference type="EMBL" id="M21030">
    <property type="protein sequence ID" value="AAA45516.1"/>
    <property type="status" value="ALT_INIT"/>
    <property type="molecule type" value="Genomic_DNA"/>
</dbReference>
<dbReference type="EMBL" id="X04820">
    <property type="protein sequence ID" value="CAA28506.1"/>
    <property type="status" value="ALT_INIT"/>
    <property type="molecule type" value="Genomic_DNA"/>
</dbReference>
<dbReference type="EMBL" id="AY576428">
    <property type="protein sequence ID" value="AAT90408.1"/>
    <property type="molecule type" value="Genomic_DNA"/>
</dbReference>
<dbReference type="PIR" id="JT0293">
    <property type="entry name" value="SAVLHV"/>
</dbReference>
<dbReference type="SMR" id="P31873"/>
<dbReference type="ChEMBL" id="CHEMBL1928"/>
<dbReference type="GlyCosmos" id="P31873">
    <property type="glycosylation" value="2 sites, No reported glycans"/>
</dbReference>
<dbReference type="ABCD" id="P31873">
    <property type="antibodies" value="1 sequenced antibody"/>
</dbReference>
<dbReference type="GO" id="GO:0016020">
    <property type="term" value="C:membrane"/>
    <property type="evidence" value="ECO:0007669"/>
    <property type="project" value="UniProtKB-UniRule"/>
</dbReference>
<dbReference type="GO" id="GO:0019031">
    <property type="term" value="C:viral envelope"/>
    <property type="evidence" value="ECO:0007669"/>
    <property type="project" value="UniProtKB-KW"/>
</dbReference>
<dbReference type="GO" id="GO:0055036">
    <property type="term" value="C:virion membrane"/>
    <property type="evidence" value="ECO:0007669"/>
    <property type="project" value="UniProtKB-SubCell"/>
</dbReference>
<dbReference type="GO" id="GO:0075513">
    <property type="term" value="P:caveolin-mediated endocytosis of virus by host cell"/>
    <property type="evidence" value="ECO:0007669"/>
    <property type="project" value="UniProtKB-KW"/>
</dbReference>
<dbReference type="GO" id="GO:0039654">
    <property type="term" value="P:fusion of virus membrane with host endosome membrane"/>
    <property type="evidence" value="ECO:0007669"/>
    <property type="project" value="UniProtKB-KW"/>
</dbReference>
<dbReference type="GO" id="GO:0019062">
    <property type="term" value="P:virion attachment to host cell"/>
    <property type="evidence" value="ECO:0007669"/>
    <property type="project" value="UniProtKB-UniRule"/>
</dbReference>
<dbReference type="HAMAP" id="MF_04075">
    <property type="entry name" value="HBV_HBSAG"/>
    <property type="match status" value="1"/>
</dbReference>
<dbReference type="InterPro" id="IPR000349">
    <property type="entry name" value="HBV_HBSAG"/>
</dbReference>
<dbReference type="Pfam" id="PF00695">
    <property type="entry name" value="vMSA"/>
    <property type="match status" value="1"/>
</dbReference>